<sequence>MELNPTEKDKLLIFTAGLVAERRKARGLKLNYPEAVAFISAALLEGARDGMTVSELMHFGTTLLKREDVMDGVPEMIAEVQVEATFPDGSKLVTVHQPIV</sequence>
<dbReference type="EC" id="3.5.1.5" evidence="1"/>
<dbReference type="EMBL" id="CP000863">
    <property type="protein sequence ID" value="ACC56284.1"/>
    <property type="molecule type" value="Genomic_DNA"/>
</dbReference>
<dbReference type="RefSeq" id="WP_000422460.1">
    <property type="nucleotide sequence ID" value="NZ_CP031380.1"/>
</dbReference>
<dbReference type="SMR" id="B2HVR8"/>
<dbReference type="GeneID" id="92892975"/>
<dbReference type="KEGG" id="abc:ACICU_00972"/>
<dbReference type="HOGENOM" id="CLU_145825_1_0_6"/>
<dbReference type="UniPathway" id="UPA00258">
    <property type="reaction ID" value="UER00370"/>
</dbReference>
<dbReference type="Proteomes" id="UP000008839">
    <property type="component" value="Chromosome"/>
</dbReference>
<dbReference type="GO" id="GO:0005737">
    <property type="term" value="C:cytoplasm"/>
    <property type="evidence" value="ECO:0007669"/>
    <property type="project" value="UniProtKB-SubCell"/>
</dbReference>
<dbReference type="GO" id="GO:0016151">
    <property type="term" value="F:nickel cation binding"/>
    <property type="evidence" value="ECO:0007669"/>
    <property type="project" value="InterPro"/>
</dbReference>
<dbReference type="GO" id="GO:0009039">
    <property type="term" value="F:urease activity"/>
    <property type="evidence" value="ECO:0007669"/>
    <property type="project" value="UniProtKB-UniRule"/>
</dbReference>
<dbReference type="GO" id="GO:0043419">
    <property type="term" value="P:urea catabolic process"/>
    <property type="evidence" value="ECO:0007669"/>
    <property type="project" value="UniProtKB-UniRule"/>
</dbReference>
<dbReference type="CDD" id="cd00390">
    <property type="entry name" value="Urease_gamma"/>
    <property type="match status" value="1"/>
</dbReference>
<dbReference type="Gene3D" id="3.30.280.10">
    <property type="entry name" value="Urease, gamma-like subunit"/>
    <property type="match status" value="1"/>
</dbReference>
<dbReference type="HAMAP" id="MF_00739">
    <property type="entry name" value="Urease_gamma"/>
    <property type="match status" value="1"/>
</dbReference>
<dbReference type="InterPro" id="IPR012010">
    <property type="entry name" value="Urease_gamma"/>
</dbReference>
<dbReference type="InterPro" id="IPR002026">
    <property type="entry name" value="Urease_gamma/gamma-beta_su"/>
</dbReference>
<dbReference type="InterPro" id="IPR036463">
    <property type="entry name" value="Urease_gamma_sf"/>
</dbReference>
<dbReference type="InterPro" id="IPR050069">
    <property type="entry name" value="Urease_subunit"/>
</dbReference>
<dbReference type="NCBIfam" id="NF009712">
    <property type="entry name" value="PRK13241.1"/>
    <property type="match status" value="1"/>
</dbReference>
<dbReference type="NCBIfam" id="TIGR00193">
    <property type="entry name" value="urease_gam"/>
    <property type="match status" value="1"/>
</dbReference>
<dbReference type="PANTHER" id="PTHR33569">
    <property type="entry name" value="UREASE"/>
    <property type="match status" value="1"/>
</dbReference>
<dbReference type="PANTHER" id="PTHR33569:SF1">
    <property type="entry name" value="UREASE"/>
    <property type="match status" value="1"/>
</dbReference>
<dbReference type="Pfam" id="PF00547">
    <property type="entry name" value="Urease_gamma"/>
    <property type="match status" value="1"/>
</dbReference>
<dbReference type="PIRSF" id="PIRSF001223">
    <property type="entry name" value="Urease_gamma"/>
    <property type="match status" value="1"/>
</dbReference>
<dbReference type="SUPFAM" id="SSF54111">
    <property type="entry name" value="Urease, gamma-subunit"/>
    <property type="match status" value="1"/>
</dbReference>
<keyword id="KW-0963">Cytoplasm</keyword>
<keyword id="KW-0378">Hydrolase</keyword>
<reference key="1">
    <citation type="journal article" date="2008" name="Antimicrob. Agents Chemother.">
        <title>Whole-genome pyrosequencing of an epidemic multidrug-resistant Acinetobacter baumannii strain belonging to the European clone II group.</title>
        <authorList>
            <person name="Iacono M."/>
            <person name="Villa L."/>
            <person name="Fortini D."/>
            <person name="Bordoni R."/>
            <person name="Imperi F."/>
            <person name="Bonnal R.J."/>
            <person name="Sicheritz-Ponten T."/>
            <person name="De Bellis G."/>
            <person name="Visca P."/>
            <person name="Cassone A."/>
            <person name="Carattoli A."/>
        </authorList>
    </citation>
    <scope>NUCLEOTIDE SEQUENCE [LARGE SCALE GENOMIC DNA]</scope>
    <source>
        <strain>ACICU</strain>
    </source>
</reference>
<accession>B2HVR8</accession>
<gene>
    <name evidence="1" type="primary">ureA</name>
    <name type="ordered locus">ACICU_00972</name>
</gene>
<proteinExistence type="inferred from homology"/>
<name>URE3_ACIBC</name>
<evidence type="ECO:0000255" key="1">
    <source>
        <dbReference type="HAMAP-Rule" id="MF_00739"/>
    </source>
</evidence>
<organism>
    <name type="scientific">Acinetobacter baumannii (strain ACICU)</name>
    <dbReference type="NCBI Taxonomy" id="405416"/>
    <lineage>
        <taxon>Bacteria</taxon>
        <taxon>Pseudomonadati</taxon>
        <taxon>Pseudomonadota</taxon>
        <taxon>Gammaproteobacteria</taxon>
        <taxon>Moraxellales</taxon>
        <taxon>Moraxellaceae</taxon>
        <taxon>Acinetobacter</taxon>
        <taxon>Acinetobacter calcoaceticus/baumannii complex</taxon>
    </lineage>
</organism>
<protein>
    <recommendedName>
        <fullName evidence="1">Urease subunit gamma</fullName>
        <ecNumber evidence="1">3.5.1.5</ecNumber>
    </recommendedName>
    <alternativeName>
        <fullName evidence="1">Urea amidohydrolase subunit gamma</fullName>
    </alternativeName>
</protein>
<feature type="chain" id="PRO_1000199842" description="Urease subunit gamma">
    <location>
        <begin position="1"/>
        <end position="100"/>
    </location>
</feature>
<comment type="catalytic activity">
    <reaction evidence="1">
        <text>urea + 2 H2O + H(+) = hydrogencarbonate + 2 NH4(+)</text>
        <dbReference type="Rhea" id="RHEA:20557"/>
        <dbReference type="ChEBI" id="CHEBI:15377"/>
        <dbReference type="ChEBI" id="CHEBI:15378"/>
        <dbReference type="ChEBI" id="CHEBI:16199"/>
        <dbReference type="ChEBI" id="CHEBI:17544"/>
        <dbReference type="ChEBI" id="CHEBI:28938"/>
        <dbReference type="EC" id="3.5.1.5"/>
    </reaction>
</comment>
<comment type="pathway">
    <text evidence="1">Nitrogen metabolism; urea degradation; CO(2) and NH(3) from urea (urease route): step 1/1.</text>
</comment>
<comment type="subunit">
    <text evidence="1">Heterotrimer of UreA (gamma), UreB (beta) and UreC (alpha) subunits. Three heterotrimers associate to form the active enzyme.</text>
</comment>
<comment type="subcellular location">
    <subcellularLocation>
        <location evidence="1">Cytoplasm</location>
    </subcellularLocation>
</comment>
<comment type="similarity">
    <text evidence="1">Belongs to the urease gamma subunit family.</text>
</comment>